<keyword id="KW-0963">Cytoplasm</keyword>
<keyword id="KW-0275">Fatty acid biosynthesis</keyword>
<keyword id="KW-0276">Fatty acid metabolism</keyword>
<keyword id="KW-0444">Lipid biosynthesis</keyword>
<keyword id="KW-0443">Lipid metabolism</keyword>
<keyword id="KW-0596">Phosphopantetheine</keyword>
<keyword id="KW-0597">Phosphoprotein</keyword>
<gene>
    <name evidence="1" type="primary">acpP</name>
    <name type="ordered locus">BARBAKC583_0498</name>
</gene>
<protein>
    <recommendedName>
        <fullName evidence="1">Acyl carrier protein</fullName>
        <shortName evidence="1">ACP</shortName>
    </recommendedName>
</protein>
<reference key="1">
    <citation type="submission" date="2006-12" db="EMBL/GenBank/DDBJ databases">
        <authorList>
            <person name="Hendrix L."/>
            <person name="Mohamoud Y."/>
            <person name="Radune D."/>
            <person name="Shvartsbeyn A."/>
            <person name="Daugherty S."/>
            <person name="Dodson R."/>
            <person name="Durkin A.S."/>
            <person name="Harkins D."/>
            <person name="Huot H."/>
            <person name="Kothari S.P."/>
            <person name="Madupu R."/>
            <person name="Li J."/>
            <person name="Nelson W.C."/>
            <person name="Shrivastava S."/>
            <person name="Giglio M.G."/>
            <person name="Haft D."/>
            <person name="Selengut J."/>
            <person name="Fraser-Ligget C."/>
            <person name="Seshadri R."/>
        </authorList>
    </citation>
    <scope>NUCLEOTIDE SEQUENCE [LARGE SCALE GENOMIC DNA]</scope>
    <source>
        <strain>ATCC 35685 / KC583 / Herrer 020/F12,63</strain>
    </source>
</reference>
<feature type="chain" id="PRO_1000066559" description="Acyl carrier protein">
    <location>
        <begin position="1"/>
        <end position="78"/>
    </location>
</feature>
<feature type="domain" description="Carrier" evidence="2">
    <location>
        <begin position="2"/>
        <end position="77"/>
    </location>
</feature>
<feature type="modified residue" description="O-(pantetheine 4'-phosphoryl)serine" evidence="2">
    <location>
        <position position="37"/>
    </location>
</feature>
<proteinExistence type="inferred from homology"/>
<evidence type="ECO:0000255" key="1">
    <source>
        <dbReference type="HAMAP-Rule" id="MF_01217"/>
    </source>
</evidence>
<evidence type="ECO:0000255" key="2">
    <source>
        <dbReference type="PROSITE-ProRule" id="PRU00258"/>
    </source>
</evidence>
<dbReference type="EMBL" id="CP000524">
    <property type="protein sequence ID" value="ABM45626.1"/>
    <property type="molecule type" value="Genomic_DNA"/>
</dbReference>
<dbReference type="RefSeq" id="WP_005766592.1">
    <property type="nucleotide sequence ID" value="NC_008783.1"/>
</dbReference>
<dbReference type="SMR" id="A1US60"/>
<dbReference type="STRING" id="360095.BARBAKC583_0498"/>
<dbReference type="GeneID" id="4684417"/>
<dbReference type="KEGG" id="bbk:BARBAKC583_0498"/>
<dbReference type="PATRIC" id="fig|360095.6.peg.481"/>
<dbReference type="eggNOG" id="COG0236">
    <property type="taxonomic scope" value="Bacteria"/>
</dbReference>
<dbReference type="HOGENOM" id="CLU_108696_5_1_5"/>
<dbReference type="OrthoDB" id="9804551at2"/>
<dbReference type="UniPathway" id="UPA00094"/>
<dbReference type="Proteomes" id="UP000000643">
    <property type="component" value="Chromosome"/>
</dbReference>
<dbReference type="GO" id="GO:0005829">
    <property type="term" value="C:cytosol"/>
    <property type="evidence" value="ECO:0007669"/>
    <property type="project" value="TreeGrafter"/>
</dbReference>
<dbReference type="GO" id="GO:0016020">
    <property type="term" value="C:membrane"/>
    <property type="evidence" value="ECO:0007669"/>
    <property type="project" value="GOC"/>
</dbReference>
<dbReference type="GO" id="GO:0000035">
    <property type="term" value="F:acyl binding"/>
    <property type="evidence" value="ECO:0007669"/>
    <property type="project" value="TreeGrafter"/>
</dbReference>
<dbReference type="GO" id="GO:0000036">
    <property type="term" value="F:acyl carrier activity"/>
    <property type="evidence" value="ECO:0007669"/>
    <property type="project" value="UniProtKB-UniRule"/>
</dbReference>
<dbReference type="GO" id="GO:0031177">
    <property type="term" value="F:phosphopantetheine binding"/>
    <property type="evidence" value="ECO:0007669"/>
    <property type="project" value="InterPro"/>
</dbReference>
<dbReference type="GO" id="GO:0009245">
    <property type="term" value="P:lipid A biosynthetic process"/>
    <property type="evidence" value="ECO:0007669"/>
    <property type="project" value="TreeGrafter"/>
</dbReference>
<dbReference type="FunFam" id="1.10.1200.10:FF:000001">
    <property type="entry name" value="Acyl carrier protein"/>
    <property type="match status" value="1"/>
</dbReference>
<dbReference type="Gene3D" id="1.10.1200.10">
    <property type="entry name" value="ACP-like"/>
    <property type="match status" value="1"/>
</dbReference>
<dbReference type="HAMAP" id="MF_01217">
    <property type="entry name" value="Acyl_carrier"/>
    <property type="match status" value="1"/>
</dbReference>
<dbReference type="InterPro" id="IPR003231">
    <property type="entry name" value="ACP"/>
</dbReference>
<dbReference type="InterPro" id="IPR036736">
    <property type="entry name" value="ACP-like_sf"/>
</dbReference>
<dbReference type="InterPro" id="IPR020806">
    <property type="entry name" value="PKS_PP-bd"/>
</dbReference>
<dbReference type="InterPro" id="IPR009081">
    <property type="entry name" value="PP-bd_ACP"/>
</dbReference>
<dbReference type="InterPro" id="IPR006162">
    <property type="entry name" value="Ppantetheine_attach_site"/>
</dbReference>
<dbReference type="NCBIfam" id="TIGR00517">
    <property type="entry name" value="acyl_carrier"/>
    <property type="match status" value="1"/>
</dbReference>
<dbReference type="NCBIfam" id="NF002148">
    <property type="entry name" value="PRK00982.1-2"/>
    <property type="match status" value="1"/>
</dbReference>
<dbReference type="NCBIfam" id="NF002149">
    <property type="entry name" value="PRK00982.1-3"/>
    <property type="match status" value="1"/>
</dbReference>
<dbReference type="NCBIfam" id="NF002150">
    <property type="entry name" value="PRK00982.1-4"/>
    <property type="match status" value="1"/>
</dbReference>
<dbReference type="NCBIfam" id="NF002151">
    <property type="entry name" value="PRK00982.1-5"/>
    <property type="match status" value="1"/>
</dbReference>
<dbReference type="PANTHER" id="PTHR20863">
    <property type="entry name" value="ACYL CARRIER PROTEIN"/>
    <property type="match status" value="1"/>
</dbReference>
<dbReference type="PANTHER" id="PTHR20863:SF76">
    <property type="entry name" value="CARRIER DOMAIN-CONTAINING PROTEIN"/>
    <property type="match status" value="1"/>
</dbReference>
<dbReference type="Pfam" id="PF00550">
    <property type="entry name" value="PP-binding"/>
    <property type="match status" value="1"/>
</dbReference>
<dbReference type="SMART" id="SM00823">
    <property type="entry name" value="PKS_PP"/>
    <property type="match status" value="1"/>
</dbReference>
<dbReference type="SUPFAM" id="SSF47336">
    <property type="entry name" value="ACP-like"/>
    <property type="match status" value="1"/>
</dbReference>
<dbReference type="PROSITE" id="PS50075">
    <property type="entry name" value="CARRIER"/>
    <property type="match status" value="1"/>
</dbReference>
<dbReference type="PROSITE" id="PS00012">
    <property type="entry name" value="PHOSPHOPANTETHEINE"/>
    <property type="match status" value="1"/>
</dbReference>
<comment type="function">
    <text evidence="1">Carrier of the growing fatty acid chain in fatty acid biosynthesis.</text>
</comment>
<comment type="pathway">
    <text evidence="1">Lipid metabolism; fatty acid biosynthesis.</text>
</comment>
<comment type="subcellular location">
    <subcellularLocation>
        <location evidence="1">Cytoplasm</location>
    </subcellularLocation>
</comment>
<comment type="PTM">
    <text evidence="1">4'-phosphopantetheine is transferred from CoA to a specific serine of apo-ACP by AcpS. This modification is essential for activity because fatty acids are bound in thioester linkage to the sulfhydryl of the prosthetic group.</text>
</comment>
<comment type="similarity">
    <text evidence="1">Belongs to the acyl carrier protein (ACP) family.</text>
</comment>
<sequence length="78" mass="8548">MSDTEERVKKIIVEHLGVDADKVVQNASFIDDLGADSLDTVELVMAFEEEFGIEIPDDAAETIFTVNDAVKFIDKASS</sequence>
<organism>
    <name type="scientific">Bartonella bacilliformis (strain ATCC 35685 / KC583 / Herrer 020/F12,63)</name>
    <dbReference type="NCBI Taxonomy" id="360095"/>
    <lineage>
        <taxon>Bacteria</taxon>
        <taxon>Pseudomonadati</taxon>
        <taxon>Pseudomonadota</taxon>
        <taxon>Alphaproteobacteria</taxon>
        <taxon>Hyphomicrobiales</taxon>
        <taxon>Bartonellaceae</taxon>
        <taxon>Bartonella</taxon>
    </lineage>
</organism>
<accession>A1US60</accession>
<name>ACP_BARBK</name>